<accession>B0RPU9</accession>
<reference key="1">
    <citation type="journal article" date="2008" name="J. Biotechnol.">
        <title>The genome of Xanthomonas campestris pv. campestris B100 and its use for the reconstruction of metabolic pathways involved in xanthan biosynthesis.</title>
        <authorList>
            <person name="Vorhoelter F.-J."/>
            <person name="Schneiker S."/>
            <person name="Goesmann A."/>
            <person name="Krause L."/>
            <person name="Bekel T."/>
            <person name="Kaiser O."/>
            <person name="Linke B."/>
            <person name="Patschkowski T."/>
            <person name="Rueckert C."/>
            <person name="Schmid J."/>
            <person name="Sidhu V.K."/>
            <person name="Sieber V."/>
            <person name="Tauch A."/>
            <person name="Watt S.A."/>
            <person name="Weisshaar B."/>
            <person name="Becker A."/>
            <person name="Niehaus K."/>
            <person name="Puehler A."/>
        </authorList>
    </citation>
    <scope>NUCLEOTIDE SEQUENCE [LARGE SCALE GENOMIC DNA]</scope>
    <source>
        <strain>B100</strain>
    </source>
</reference>
<feature type="chain" id="PRO_1000100482" description="Nicotinate-nucleotide--dimethylbenzimidazole phosphoribosyltransferase">
    <location>
        <begin position="1"/>
        <end position="348"/>
    </location>
</feature>
<feature type="active site" description="Proton acceptor" evidence="1">
    <location>
        <position position="316"/>
    </location>
</feature>
<name>COBT_XANCB</name>
<proteinExistence type="inferred from homology"/>
<dbReference type="EC" id="2.4.2.21" evidence="1"/>
<dbReference type="EMBL" id="AM920689">
    <property type="protein sequence ID" value="CAP50484.1"/>
    <property type="molecule type" value="Genomic_DNA"/>
</dbReference>
<dbReference type="SMR" id="B0RPU9"/>
<dbReference type="KEGG" id="xca:xcc-b100_1136"/>
<dbReference type="HOGENOM" id="CLU_002982_0_0_6"/>
<dbReference type="UniPathway" id="UPA00061">
    <property type="reaction ID" value="UER00516"/>
</dbReference>
<dbReference type="Proteomes" id="UP000001188">
    <property type="component" value="Chromosome"/>
</dbReference>
<dbReference type="GO" id="GO:0008939">
    <property type="term" value="F:nicotinate-nucleotide-dimethylbenzimidazole phosphoribosyltransferase activity"/>
    <property type="evidence" value="ECO:0007669"/>
    <property type="project" value="UniProtKB-UniRule"/>
</dbReference>
<dbReference type="GO" id="GO:0009236">
    <property type="term" value="P:cobalamin biosynthetic process"/>
    <property type="evidence" value="ECO:0007669"/>
    <property type="project" value="UniProtKB-KW"/>
</dbReference>
<dbReference type="CDD" id="cd02439">
    <property type="entry name" value="DMB-PRT_CobT"/>
    <property type="match status" value="1"/>
</dbReference>
<dbReference type="FunFam" id="3.40.50.10210:FF:000001">
    <property type="entry name" value="Nicotinate-nucleotide--dimethylbenzimidazole phosphoribosyltransferase"/>
    <property type="match status" value="1"/>
</dbReference>
<dbReference type="Gene3D" id="1.10.1610.10">
    <property type="match status" value="1"/>
</dbReference>
<dbReference type="Gene3D" id="3.40.50.10210">
    <property type="match status" value="1"/>
</dbReference>
<dbReference type="HAMAP" id="MF_00230">
    <property type="entry name" value="CobT"/>
    <property type="match status" value="1"/>
</dbReference>
<dbReference type="InterPro" id="IPR003200">
    <property type="entry name" value="Nict_dMeBzImd_PRibTrfase"/>
</dbReference>
<dbReference type="InterPro" id="IPR017846">
    <property type="entry name" value="Nict_dMeBzImd_PRibTrfase_bact"/>
</dbReference>
<dbReference type="InterPro" id="IPR023195">
    <property type="entry name" value="Nict_dMeBzImd_PRibTrfase_N"/>
</dbReference>
<dbReference type="InterPro" id="IPR036087">
    <property type="entry name" value="Nict_dMeBzImd_PRibTrfase_sf"/>
</dbReference>
<dbReference type="NCBIfam" id="TIGR03160">
    <property type="entry name" value="cobT_DBIPRT"/>
    <property type="match status" value="1"/>
</dbReference>
<dbReference type="NCBIfam" id="NF000996">
    <property type="entry name" value="PRK00105.1"/>
    <property type="match status" value="1"/>
</dbReference>
<dbReference type="PANTHER" id="PTHR43463">
    <property type="entry name" value="NICOTINATE-NUCLEOTIDE--DIMETHYLBENZIMIDAZOLE PHOSPHORIBOSYLTRANSFERASE"/>
    <property type="match status" value="1"/>
</dbReference>
<dbReference type="PANTHER" id="PTHR43463:SF1">
    <property type="entry name" value="NICOTINATE-NUCLEOTIDE--DIMETHYLBENZIMIDAZOLE PHOSPHORIBOSYLTRANSFERASE"/>
    <property type="match status" value="1"/>
</dbReference>
<dbReference type="Pfam" id="PF02277">
    <property type="entry name" value="DBI_PRT"/>
    <property type="match status" value="1"/>
</dbReference>
<dbReference type="SUPFAM" id="SSF52733">
    <property type="entry name" value="Nicotinate mononucleotide:5,6-dimethylbenzimidazole phosphoribosyltransferase (CobT)"/>
    <property type="match status" value="1"/>
</dbReference>
<evidence type="ECO:0000255" key="1">
    <source>
        <dbReference type="HAMAP-Rule" id="MF_00230"/>
    </source>
</evidence>
<organism>
    <name type="scientific">Xanthomonas campestris pv. campestris (strain B100)</name>
    <dbReference type="NCBI Taxonomy" id="509169"/>
    <lineage>
        <taxon>Bacteria</taxon>
        <taxon>Pseudomonadati</taxon>
        <taxon>Pseudomonadota</taxon>
        <taxon>Gammaproteobacteria</taxon>
        <taxon>Lysobacterales</taxon>
        <taxon>Lysobacteraceae</taxon>
        <taxon>Xanthomonas</taxon>
    </lineage>
</organism>
<sequence>MSIEWIQGACAVPDARVQAAALARQEQLTKPPGALGRLEQLAVQFAAWQRNEQPTVQRIWIAVYAADHGVAAEGVSMFPQAVTGEMVRNFARGGAAIAVLARELGARLEVVNLGVVNDPGELSRVRRAWIAPACANICEQAAMTPAQLRDALAAGAESIAQARTCGTQLFVGGEMGIGNSTAAAALSCALLSQFPQAMAGAGTGLDAEGIAHKATVITRALAVHADAATPLERLRRLGGFEIAALVGAYIAAAQAGIPVLVDGFISTAAALVAVHLNPGVREWLLFGHRSQERGHAALLRALEAEPLLQLDLRLGEASGAAVAIPLLRTACALHNGMATFAEAGVSDA</sequence>
<keyword id="KW-0169">Cobalamin biosynthesis</keyword>
<keyword id="KW-0328">Glycosyltransferase</keyword>
<keyword id="KW-0808">Transferase</keyword>
<gene>
    <name evidence="1" type="primary">cobT</name>
    <name type="ordered locus">xcc-b100_1136</name>
</gene>
<protein>
    <recommendedName>
        <fullName evidence="1">Nicotinate-nucleotide--dimethylbenzimidazole phosphoribosyltransferase</fullName>
        <shortName evidence="1">NN:DBI PRT</shortName>
        <ecNumber evidence="1">2.4.2.21</ecNumber>
    </recommendedName>
    <alternativeName>
        <fullName evidence="1">N(1)-alpha-phosphoribosyltransferase</fullName>
    </alternativeName>
</protein>
<comment type="function">
    <text evidence="1">Catalyzes the synthesis of alpha-ribazole-5'-phosphate from nicotinate mononucleotide (NAMN) and 5,6-dimethylbenzimidazole (DMB).</text>
</comment>
<comment type="catalytic activity">
    <reaction evidence="1">
        <text>5,6-dimethylbenzimidazole + nicotinate beta-D-ribonucleotide = alpha-ribazole 5'-phosphate + nicotinate + H(+)</text>
        <dbReference type="Rhea" id="RHEA:11196"/>
        <dbReference type="ChEBI" id="CHEBI:15378"/>
        <dbReference type="ChEBI" id="CHEBI:15890"/>
        <dbReference type="ChEBI" id="CHEBI:32544"/>
        <dbReference type="ChEBI" id="CHEBI:57502"/>
        <dbReference type="ChEBI" id="CHEBI:57918"/>
        <dbReference type="EC" id="2.4.2.21"/>
    </reaction>
</comment>
<comment type="pathway">
    <text evidence="1">Nucleoside biosynthesis; alpha-ribazole biosynthesis; alpha-ribazole from 5,6-dimethylbenzimidazole: step 1/2.</text>
</comment>
<comment type="similarity">
    <text evidence="1">Belongs to the CobT family.</text>
</comment>